<evidence type="ECO:0000255" key="1"/>
<evidence type="ECO:0000305" key="2"/>
<proteinExistence type="evidence at transcript level"/>
<dbReference type="EMBL" id="X14134">
    <property type="protein sequence ID" value="CAA32352.1"/>
    <property type="status" value="ALT_INIT"/>
    <property type="molecule type" value="mRNA"/>
</dbReference>
<dbReference type="EMBL" id="U00433">
    <property type="protein sequence ID" value="AAA19566.1"/>
    <property type="molecule type" value="Unassigned_DNA"/>
</dbReference>
<dbReference type="PIR" id="JL0090">
    <property type="entry name" value="JL0090"/>
</dbReference>
<dbReference type="SMR" id="P13506"/>
<dbReference type="GlyCosmos" id="P13506">
    <property type="glycosylation" value="2 sites, No reported glycans"/>
</dbReference>
<dbReference type="Proteomes" id="UP000515129">
    <property type="component" value="Unplaced"/>
</dbReference>
<dbReference type="GO" id="GO:0005576">
    <property type="term" value="C:extracellular region"/>
    <property type="evidence" value="ECO:0007669"/>
    <property type="project" value="UniProtKB-SubCell"/>
</dbReference>
<dbReference type="GO" id="GO:0005764">
    <property type="term" value="C:lysosome"/>
    <property type="evidence" value="ECO:0007669"/>
    <property type="project" value="TreeGrafter"/>
</dbReference>
<dbReference type="GO" id="GO:0005509">
    <property type="term" value="F:calcium ion binding"/>
    <property type="evidence" value="ECO:0007669"/>
    <property type="project" value="InterPro"/>
</dbReference>
<dbReference type="GO" id="GO:0007160">
    <property type="term" value="P:cell-matrix adhesion"/>
    <property type="evidence" value="ECO:0007669"/>
    <property type="project" value="InterPro"/>
</dbReference>
<dbReference type="InterPro" id="IPR001299">
    <property type="entry name" value="Ependymin"/>
</dbReference>
<dbReference type="InterPro" id="IPR018224">
    <property type="entry name" value="Ependymin_CS"/>
</dbReference>
<dbReference type="PANTHER" id="PTHR10697:SF5">
    <property type="entry name" value="EPENDYMIN-RELATED"/>
    <property type="match status" value="1"/>
</dbReference>
<dbReference type="PANTHER" id="PTHR10697">
    <property type="entry name" value="MAMMALIAN EPENDYMIN-RELATED PROTEIN 1"/>
    <property type="match status" value="1"/>
</dbReference>
<dbReference type="Pfam" id="PF00811">
    <property type="entry name" value="Ependymin"/>
    <property type="match status" value="1"/>
</dbReference>
<dbReference type="PRINTS" id="PR00317">
    <property type="entry name" value="EPENDYMIN"/>
</dbReference>
<dbReference type="SMART" id="SM00026">
    <property type="entry name" value="EPEND"/>
    <property type="match status" value="1"/>
</dbReference>
<dbReference type="PROSITE" id="PS00898">
    <property type="entry name" value="EPENDYMIN_1"/>
    <property type="match status" value="1"/>
</dbReference>
<dbReference type="PROSITE" id="PS00899">
    <property type="entry name" value="EPENDYMIN_2"/>
    <property type="match status" value="1"/>
</dbReference>
<protein>
    <recommendedName>
        <fullName>Ependymin-1</fullName>
    </recommendedName>
    <alternativeName>
        <fullName>Ependymin I</fullName>
        <shortName>EPD-I</shortName>
    </alternativeName>
</protein>
<gene>
    <name type="primary">epd1</name>
    <name type="synonym">epn1</name>
</gene>
<name>EPD1_CARAU</name>
<reference key="1">
    <citation type="journal article" date="1989" name="J. Biol. Chem.">
        <title>Biosynthesis of ependymins from goldfish brain.</title>
        <authorList>
            <person name="Koenigstorfer A."/>
            <person name="Sterrer S."/>
            <person name="Hoffmann W."/>
        </authorList>
    </citation>
    <scope>NUCLEOTIDE SEQUENCE</scope>
    <source>
        <tissue>Brain</tissue>
    </source>
</reference>
<reference key="2">
    <citation type="journal article" date="1989" name="J. Neurochem.">
        <title>Molecular characterization of an ependymin precursor from goldfish brain.</title>
        <authorList>
            <person name="Koenigstorfer A."/>
            <person name="Sterrer S."/>
            <person name="Eckerskorn C."/>
            <person name="Lottspeich F."/>
            <person name="Schmidt R."/>
            <person name="Hoffmann W."/>
        </authorList>
    </citation>
    <scope>NUCLEOTIDE SEQUENCE</scope>
    <source>
        <tissue>Brain</tissue>
    </source>
</reference>
<reference key="3">
    <citation type="journal article" date="1994" name="Gene">
        <title>Cloning and sequencing the genes encoding goldfish and carp ependymin.</title>
        <authorList>
            <person name="Adams D.S."/>
            <person name="Shashoua V.E."/>
        </authorList>
    </citation>
    <scope>NUCLEOTIDE SEQUENCE</scope>
    <source>
        <tissue>Brain</tissue>
    </source>
</reference>
<feature type="signal peptide">
    <location>
        <begin position="1"/>
        <end position="20"/>
    </location>
</feature>
<feature type="chain" id="PRO_0000008341" description="Ependymin-1">
    <location>
        <begin position="21"/>
        <end position="215"/>
    </location>
</feature>
<feature type="glycosylation site" description="N-linked (GlcNAc...) asparagine" evidence="1">
    <location>
        <position position="71"/>
    </location>
</feature>
<feature type="glycosylation site" description="N-linked (GlcNAc...) asparagine" evidence="1">
    <location>
        <position position="94"/>
    </location>
</feature>
<organism>
    <name type="scientific">Carassius auratus</name>
    <name type="common">Goldfish</name>
    <dbReference type="NCBI Taxonomy" id="7957"/>
    <lineage>
        <taxon>Eukaryota</taxon>
        <taxon>Metazoa</taxon>
        <taxon>Chordata</taxon>
        <taxon>Craniata</taxon>
        <taxon>Vertebrata</taxon>
        <taxon>Euteleostomi</taxon>
        <taxon>Actinopterygii</taxon>
        <taxon>Neopterygii</taxon>
        <taxon>Teleostei</taxon>
        <taxon>Ostariophysi</taxon>
        <taxon>Cypriniformes</taxon>
        <taxon>Cyprinidae</taxon>
        <taxon>Cyprininae</taxon>
        <taxon>Carassius</taxon>
    </lineage>
</organism>
<keyword id="KW-0106">Calcium</keyword>
<keyword id="KW-1015">Disulfide bond</keyword>
<keyword id="KW-0325">Glycoprotein</keyword>
<keyword id="KW-1185">Reference proteome</keyword>
<keyword id="KW-0964">Secreted</keyword>
<keyword id="KW-0732">Signal</keyword>
<sequence>MHTVKLLCVVFSCLCAVAWASSHRQPCHAPPLTSGTMKVVSTGGHDLESGEFSYDSKANKFRFVEDTAHANKTSHMDVLIHFEEGVLYEIDSKNESCKKETLQFRKHLMEIPPDATHESEIYMGSPSITEQGLRVRVWNGKFPELHAHYSMSTTSCGCLPVSGSYHGEKKDLHFSFFGVETEVDDLQVFVPPAYCEGVAFEEAPDDHSFFDLFHD</sequence>
<comment type="function">
    <text>May play a role in neural plasticity. May be involved during axon regeneration.</text>
</comment>
<comment type="subunit">
    <text>Forms disulfide-linked dimers.</text>
</comment>
<comment type="subcellular location">
    <subcellularLocation>
        <location>Secreted</location>
    </subcellularLocation>
</comment>
<comment type="tissue specificity">
    <text>EPDs are synthesized in the meninx and secreted in the cerebrospinal fluid.</text>
</comment>
<comment type="PTM">
    <text>Different glycosylation variants are known as EPD-beta and EPD-gamma.</text>
</comment>
<comment type="PTM">
    <text>Binds calcium through the terminal sialic acids.</text>
</comment>
<comment type="similarity">
    <text evidence="2">Belongs to the ependymin family.</text>
</comment>
<comment type="sequence caution" evidence="2">
    <conflict type="erroneous initiation">
        <sequence resource="EMBL-CDS" id="CAA32352"/>
    </conflict>
</comment>
<accession>P13506</accession>